<gene>
    <name evidence="1" type="primary">obg</name>
    <name type="ordered locus">BG0805</name>
</gene>
<protein>
    <recommendedName>
        <fullName evidence="1">GTPase Obg</fullName>
        <ecNumber evidence="1">3.6.5.-</ecNumber>
    </recommendedName>
    <alternativeName>
        <fullName evidence="1">GTP-binding protein Obg</fullName>
    </alternativeName>
</protein>
<keyword id="KW-0963">Cytoplasm</keyword>
<keyword id="KW-0342">GTP-binding</keyword>
<keyword id="KW-0378">Hydrolase</keyword>
<keyword id="KW-0460">Magnesium</keyword>
<keyword id="KW-0479">Metal-binding</keyword>
<keyword id="KW-0547">Nucleotide-binding</keyword>
<evidence type="ECO:0000255" key="1">
    <source>
        <dbReference type="HAMAP-Rule" id="MF_01454"/>
    </source>
</evidence>
<evidence type="ECO:0000255" key="2">
    <source>
        <dbReference type="PROSITE-ProRule" id="PRU01231"/>
    </source>
</evidence>
<name>OBG_BORGP</name>
<comment type="function">
    <text evidence="1">An essential GTPase which binds GTP, GDP and possibly (p)ppGpp with moderate affinity, with high nucleotide exchange rates and a fairly low GTP hydrolysis rate. Plays a role in control of the cell cycle, stress response, ribosome biogenesis and in those bacteria that undergo differentiation, in morphogenesis control.</text>
</comment>
<comment type="cofactor">
    <cofactor evidence="1">
        <name>Mg(2+)</name>
        <dbReference type="ChEBI" id="CHEBI:18420"/>
    </cofactor>
</comment>
<comment type="subunit">
    <text evidence="1">Monomer.</text>
</comment>
<comment type="subcellular location">
    <subcellularLocation>
        <location evidence="1">Cytoplasm</location>
    </subcellularLocation>
</comment>
<comment type="similarity">
    <text evidence="1">Belongs to the TRAFAC class OBG-HflX-like GTPase superfamily. OBG GTPase family.</text>
</comment>
<sequence>MYNFKDSVSITVISGNGGSGCVSFLREKFNAKGGPDGGNGGSGGSVIFKVKENLRTLSSYKNGHVLCAKNGRPGMSFKRSGANGKDLILFVPPNTDIYNENDEALLCRLEKLNDEFVILKGGRGGLGNWNFKTSIRRAPRFAQPGESGNSLNVRLELFLVADIGLVGPPNAGKSSLLNRITSAKSRVANYPFTTKIPHLGVLRYSYDDLIIADIPGIIKGASFGVGLGTKFLKHITKTKILALVIDISEANFLESYNILLNELKSYSYKLFNKKKIIIANKLDLDSSEKNFNCLIKALGKEEKIIGISIYENRGIDELIKEFFILAKAF</sequence>
<dbReference type="EC" id="3.6.5.-" evidence="1"/>
<dbReference type="EMBL" id="CP000013">
    <property type="protein sequence ID" value="AAU07628.1"/>
    <property type="molecule type" value="Genomic_DNA"/>
</dbReference>
<dbReference type="SMR" id="Q65ZZ3"/>
<dbReference type="GeneID" id="45161580"/>
<dbReference type="KEGG" id="bga:BG0805"/>
<dbReference type="eggNOG" id="COG0536">
    <property type="taxonomic scope" value="Bacteria"/>
</dbReference>
<dbReference type="HOGENOM" id="CLU_011747_2_0_12"/>
<dbReference type="OrthoDB" id="9807318at2"/>
<dbReference type="Proteomes" id="UP000002276">
    <property type="component" value="Chromosome"/>
</dbReference>
<dbReference type="GO" id="GO:0005737">
    <property type="term" value="C:cytoplasm"/>
    <property type="evidence" value="ECO:0007669"/>
    <property type="project" value="UniProtKB-SubCell"/>
</dbReference>
<dbReference type="GO" id="GO:0005525">
    <property type="term" value="F:GTP binding"/>
    <property type="evidence" value="ECO:0007669"/>
    <property type="project" value="UniProtKB-UniRule"/>
</dbReference>
<dbReference type="GO" id="GO:0003924">
    <property type="term" value="F:GTPase activity"/>
    <property type="evidence" value="ECO:0007669"/>
    <property type="project" value="UniProtKB-UniRule"/>
</dbReference>
<dbReference type="GO" id="GO:0000287">
    <property type="term" value="F:magnesium ion binding"/>
    <property type="evidence" value="ECO:0007669"/>
    <property type="project" value="InterPro"/>
</dbReference>
<dbReference type="GO" id="GO:0042254">
    <property type="term" value="P:ribosome biogenesis"/>
    <property type="evidence" value="ECO:0007669"/>
    <property type="project" value="UniProtKB-UniRule"/>
</dbReference>
<dbReference type="CDD" id="cd01898">
    <property type="entry name" value="Obg"/>
    <property type="match status" value="1"/>
</dbReference>
<dbReference type="FunFam" id="2.70.210.12:FF:000001">
    <property type="entry name" value="GTPase Obg"/>
    <property type="match status" value="1"/>
</dbReference>
<dbReference type="Gene3D" id="2.70.210.12">
    <property type="entry name" value="GTP1/OBG domain"/>
    <property type="match status" value="1"/>
</dbReference>
<dbReference type="Gene3D" id="3.40.50.300">
    <property type="entry name" value="P-loop containing nucleotide triphosphate hydrolases"/>
    <property type="match status" value="1"/>
</dbReference>
<dbReference type="HAMAP" id="MF_01454">
    <property type="entry name" value="GTPase_Obg"/>
    <property type="match status" value="1"/>
</dbReference>
<dbReference type="InterPro" id="IPR031167">
    <property type="entry name" value="G_OBG"/>
</dbReference>
<dbReference type="InterPro" id="IPR006073">
    <property type="entry name" value="GTP-bd"/>
</dbReference>
<dbReference type="InterPro" id="IPR014100">
    <property type="entry name" value="GTP-bd_Obg/CgtA"/>
</dbReference>
<dbReference type="InterPro" id="IPR006074">
    <property type="entry name" value="GTP1-OBG_CS"/>
</dbReference>
<dbReference type="InterPro" id="IPR006169">
    <property type="entry name" value="GTP1_OBG_dom"/>
</dbReference>
<dbReference type="InterPro" id="IPR036726">
    <property type="entry name" value="GTP1_OBG_dom_sf"/>
</dbReference>
<dbReference type="InterPro" id="IPR045086">
    <property type="entry name" value="OBG_GTPase"/>
</dbReference>
<dbReference type="InterPro" id="IPR027417">
    <property type="entry name" value="P-loop_NTPase"/>
</dbReference>
<dbReference type="InterPro" id="IPR005225">
    <property type="entry name" value="Small_GTP-bd"/>
</dbReference>
<dbReference type="NCBIfam" id="TIGR02729">
    <property type="entry name" value="Obg_CgtA"/>
    <property type="match status" value="1"/>
</dbReference>
<dbReference type="NCBIfam" id="NF008956">
    <property type="entry name" value="PRK12299.1"/>
    <property type="match status" value="1"/>
</dbReference>
<dbReference type="NCBIfam" id="TIGR00231">
    <property type="entry name" value="small_GTP"/>
    <property type="match status" value="1"/>
</dbReference>
<dbReference type="PANTHER" id="PTHR11702">
    <property type="entry name" value="DEVELOPMENTALLY REGULATED GTP-BINDING PROTEIN-RELATED"/>
    <property type="match status" value="1"/>
</dbReference>
<dbReference type="PANTHER" id="PTHR11702:SF31">
    <property type="entry name" value="MITOCHONDRIAL RIBOSOME-ASSOCIATED GTPASE 2"/>
    <property type="match status" value="1"/>
</dbReference>
<dbReference type="Pfam" id="PF01018">
    <property type="entry name" value="GTP1_OBG"/>
    <property type="match status" value="1"/>
</dbReference>
<dbReference type="Pfam" id="PF01926">
    <property type="entry name" value="MMR_HSR1"/>
    <property type="match status" value="1"/>
</dbReference>
<dbReference type="PIRSF" id="PIRSF002401">
    <property type="entry name" value="GTP_bd_Obg/CgtA"/>
    <property type="match status" value="1"/>
</dbReference>
<dbReference type="PRINTS" id="PR00326">
    <property type="entry name" value="GTP1OBG"/>
</dbReference>
<dbReference type="SUPFAM" id="SSF82051">
    <property type="entry name" value="Obg GTP-binding protein N-terminal domain"/>
    <property type="match status" value="1"/>
</dbReference>
<dbReference type="SUPFAM" id="SSF52540">
    <property type="entry name" value="P-loop containing nucleoside triphosphate hydrolases"/>
    <property type="match status" value="1"/>
</dbReference>
<dbReference type="PROSITE" id="PS51710">
    <property type="entry name" value="G_OBG"/>
    <property type="match status" value="1"/>
</dbReference>
<dbReference type="PROSITE" id="PS00905">
    <property type="entry name" value="GTP1_OBG"/>
    <property type="match status" value="1"/>
</dbReference>
<dbReference type="PROSITE" id="PS51883">
    <property type="entry name" value="OBG"/>
    <property type="match status" value="1"/>
</dbReference>
<proteinExistence type="inferred from homology"/>
<feature type="chain" id="PRO_0000385757" description="GTPase Obg">
    <location>
        <begin position="1"/>
        <end position="329"/>
    </location>
</feature>
<feature type="domain" description="Obg" evidence="2">
    <location>
        <begin position="2"/>
        <end position="160"/>
    </location>
</feature>
<feature type="domain" description="OBG-type G" evidence="1">
    <location>
        <begin position="161"/>
        <end position="327"/>
    </location>
</feature>
<feature type="binding site" evidence="1">
    <location>
        <begin position="167"/>
        <end position="174"/>
    </location>
    <ligand>
        <name>GTP</name>
        <dbReference type="ChEBI" id="CHEBI:37565"/>
    </ligand>
</feature>
<feature type="binding site" evidence="1">
    <location>
        <position position="174"/>
    </location>
    <ligand>
        <name>Mg(2+)</name>
        <dbReference type="ChEBI" id="CHEBI:18420"/>
    </ligand>
</feature>
<feature type="binding site" evidence="1">
    <location>
        <begin position="192"/>
        <end position="196"/>
    </location>
    <ligand>
        <name>GTP</name>
        <dbReference type="ChEBI" id="CHEBI:37565"/>
    </ligand>
</feature>
<feature type="binding site" evidence="1">
    <location>
        <position position="194"/>
    </location>
    <ligand>
        <name>Mg(2+)</name>
        <dbReference type="ChEBI" id="CHEBI:18420"/>
    </ligand>
</feature>
<feature type="binding site" evidence="1">
    <location>
        <begin position="213"/>
        <end position="216"/>
    </location>
    <ligand>
        <name>GTP</name>
        <dbReference type="ChEBI" id="CHEBI:37565"/>
    </ligand>
</feature>
<feature type="binding site" evidence="1">
    <location>
        <begin position="280"/>
        <end position="283"/>
    </location>
    <ligand>
        <name>GTP</name>
        <dbReference type="ChEBI" id="CHEBI:37565"/>
    </ligand>
</feature>
<feature type="binding site" evidence="1">
    <location>
        <begin position="308"/>
        <end position="310"/>
    </location>
    <ligand>
        <name>GTP</name>
        <dbReference type="ChEBI" id="CHEBI:37565"/>
    </ligand>
</feature>
<accession>Q65ZZ3</accession>
<reference key="1">
    <citation type="journal article" date="2004" name="Nucleic Acids Res.">
        <title>Comparative analysis of the Borrelia garinii genome.</title>
        <authorList>
            <person name="Gloeckner G."/>
            <person name="Lehmann R."/>
            <person name="Romualdi A."/>
            <person name="Pradella S."/>
            <person name="Schulte-Spechtel U."/>
            <person name="Schilhabel M."/>
            <person name="Wilske B."/>
            <person name="Suehnel J."/>
            <person name="Platzer M."/>
        </authorList>
    </citation>
    <scope>NUCLEOTIDE SEQUENCE [LARGE SCALE GENOMIC DNA]</scope>
    <source>
        <strain>ATCC BAA-2496 / DSM 23469 / PBi</strain>
    </source>
</reference>
<organism>
    <name type="scientific">Borrelia garinii subsp. bavariensis (strain ATCC BAA-2496 / DSM 23469 / PBi)</name>
    <name type="common">Borreliella bavariensis</name>
    <dbReference type="NCBI Taxonomy" id="290434"/>
    <lineage>
        <taxon>Bacteria</taxon>
        <taxon>Pseudomonadati</taxon>
        <taxon>Spirochaetota</taxon>
        <taxon>Spirochaetia</taxon>
        <taxon>Spirochaetales</taxon>
        <taxon>Borreliaceae</taxon>
        <taxon>Borreliella</taxon>
    </lineage>
</organism>